<sequence>MQNDPIGLMDSGVGGLTVLKEVQRLLPTENTVFLGDQARLPYGPRSVAEVTMFTKQIAQFLRQQAGIKALVIACNTATAAALTTMQQTLPIPVIGVIAPGAQAAVQTTRNHRIGVIATAGTVKSDQYRRDILAAAPNSQIFSVACPEMVTLAEQNDLTTTHARSVVAANLASLMDKKIDTLVMGCTHFPLLRSAIQHAVGSQVTLVDPGLATAEQTAAILKTHGLLNPATTRGTAQFFTTGETAHFDTLASQWLDQQPMPAKHVSIAQLTTPMEVN</sequence>
<keyword id="KW-0133">Cell shape</keyword>
<keyword id="KW-0961">Cell wall biogenesis/degradation</keyword>
<keyword id="KW-0413">Isomerase</keyword>
<keyword id="KW-0573">Peptidoglycan synthesis</keyword>
<keyword id="KW-1185">Reference proteome</keyword>
<feature type="chain" id="PRO_1000047575" description="Glutamate racemase">
    <location>
        <begin position="1"/>
        <end position="276"/>
    </location>
</feature>
<feature type="active site" description="Proton donor/acceptor" evidence="1">
    <location>
        <position position="74"/>
    </location>
</feature>
<feature type="active site" description="Proton donor/acceptor" evidence="1">
    <location>
        <position position="185"/>
    </location>
</feature>
<feature type="binding site" evidence="1">
    <location>
        <begin position="10"/>
        <end position="11"/>
    </location>
    <ligand>
        <name>substrate</name>
    </ligand>
</feature>
<feature type="binding site" evidence="1">
    <location>
        <begin position="42"/>
        <end position="43"/>
    </location>
    <ligand>
        <name>substrate</name>
    </ligand>
</feature>
<feature type="binding site" evidence="1">
    <location>
        <begin position="75"/>
        <end position="76"/>
    </location>
    <ligand>
        <name>substrate</name>
    </ligand>
</feature>
<feature type="binding site" evidence="1">
    <location>
        <begin position="186"/>
        <end position="187"/>
    </location>
    <ligand>
        <name>substrate</name>
    </ligand>
</feature>
<name>MURI_LEVBA</name>
<accession>Q03R52</accession>
<evidence type="ECO:0000255" key="1">
    <source>
        <dbReference type="HAMAP-Rule" id="MF_00258"/>
    </source>
</evidence>
<gene>
    <name evidence="1" type="primary">murI</name>
    <name type="ordered locus">LVIS_1214</name>
</gene>
<dbReference type="EC" id="5.1.1.3" evidence="1"/>
<dbReference type="EMBL" id="CP000416">
    <property type="protein sequence ID" value="ABJ64320.1"/>
    <property type="molecule type" value="Genomic_DNA"/>
</dbReference>
<dbReference type="RefSeq" id="WP_011667950.1">
    <property type="nucleotide sequence ID" value="NC_008497.1"/>
</dbReference>
<dbReference type="SMR" id="Q03R52"/>
<dbReference type="STRING" id="387344.LVIS_1214"/>
<dbReference type="KEGG" id="lbr:LVIS_1214"/>
<dbReference type="PATRIC" id="fig|387344.15.peg.1153"/>
<dbReference type="eggNOG" id="COG0796">
    <property type="taxonomic scope" value="Bacteria"/>
</dbReference>
<dbReference type="HOGENOM" id="CLU_052344_0_1_9"/>
<dbReference type="UniPathway" id="UPA00219"/>
<dbReference type="Proteomes" id="UP000001652">
    <property type="component" value="Chromosome"/>
</dbReference>
<dbReference type="GO" id="GO:0008881">
    <property type="term" value="F:glutamate racemase activity"/>
    <property type="evidence" value="ECO:0007669"/>
    <property type="project" value="UniProtKB-UniRule"/>
</dbReference>
<dbReference type="GO" id="GO:0071555">
    <property type="term" value="P:cell wall organization"/>
    <property type="evidence" value="ECO:0007669"/>
    <property type="project" value="UniProtKB-KW"/>
</dbReference>
<dbReference type="GO" id="GO:0009252">
    <property type="term" value="P:peptidoglycan biosynthetic process"/>
    <property type="evidence" value="ECO:0007669"/>
    <property type="project" value="UniProtKB-UniRule"/>
</dbReference>
<dbReference type="GO" id="GO:0008360">
    <property type="term" value="P:regulation of cell shape"/>
    <property type="evidence" value="ECO:0007669"/>
    <property type="project" value="UniProtKB-KW"/>
</dbReference>
<dbReference type="FunFam" id="3.40.50.1860:FF:000002">
    <property type="entry name" value="Glutamate racemase"/>
    <property type="match status" value="1"/>
</dbReference>
<dbReference type="Gene3D" id="3.40.50.1860">
    <property type="match status" value="2"/>
</dbReference>
<dbReference type="HAMAP" id="MF_00258">
    <property type="entry name" value="Glu_racemase"/>
    <property type="match status" value="1"/>
</dbReference>
<dbReference type="InterPro" id="IPR015942">
    <property type="entry name" value="Asp/Glu/hydantoin_racemase"/>
</dbReference>
<dbReference type="InterPro" id="IPR001920">
    <property type="entry name" value="Asp/Glu_race"/>
</dbReference>
<dbReference type="InterPro" id="IPR018187">
    <property type="entry name" value="Asp/Glu_racemase_AS_1"/>
</dbReference>
<dbReference type="InterPro" id="IPR033134">
    <property type="entry name" value="Asp/Glu_racemase_AS_2"/>
</dbReference>
<dbReference type="InterPro" id="IPR004391">
    <property type="entry name" value="Glu_race"/>
</dbReference>
<dbReference type="NCBIfam" id="TIGR00067">
    <property type="entry name" value="glut_race"/>
    <property type="match status" value="1"/>
</dbReference>
<dbReference type="PANTHER" id="PTHR21198">
    <property type="entry name" value="GLUTAMATE RACEMASE"/>
    <property type="match status" value="1"/>
</dbReference>
<dbReference type="PANTHER" id="PTHR21198:SF2">
    <property type="entry name" value="GLUTAMATE RACEMASE"/>
    <property type="match status" value="1"/>
</dbReference>
<dbReference type="Pfam" id="PF01177">
    <property type="entry name" value="Asp_Glu_race"/>
    <property type="match status" value="1"/>
</dbReference>
<dbReference type="SUPFAM" id="SSF53681">
    <property type="entry name" value="Aspartate/glutamate racemase"/>
    <property type="match status" value="2"/>
</dbReference>
<dbReference type="PROSITE" id="PS00923">
    <property type="entry name" value="ASP_GLU_RACEMASE_1"/>
    <property type="match status" value="1"/>
</dbReference>
<dbReference type="PROSITE" id="PS00924">
    <property type="entry name" value="ASP_GLU_RACEMASE_2"/>
    <property type="match status" value="1"/>
</dbReference>
<organism>
    <name type="scientific">Levilactobacillus brevis (strain ATCC 367 / BCRC 12310 / CIP 105137 / JCM 1170 / LMG 11437 / NCIMB 947 / NCTC 947)</name>
    <name type="common">Lactobacillus brevis</name>
    <dbReference type="NCBI Taxonomy" id="387344"/>
    <lineage>
        <taxon>Bacteria</taxon>
        <taxon>Bacillati</taxon>
        <taxon>Bacillota</taxon>
        <taxon>Bacilli</taxon>
        <taxon>Lactobacillales</taxon>
        <taxon>Lactobacillaceae</taxon>
        <taxon>Levilactobacillus</taxon>
    </lineage>
</organism>
<comment type="function">
    <text evidence="1">Provides the (R)-glutamate required for cell wall biosynthesis.</text>
</comment>
<comment type="catalytic activity">
    <reaction evidence="1">
        <text>L-glutamate = D-glutamate</text>
        <dbReference type="Rhea" id="RHEA:12813"/>
        <dbReference type="ChEBI" id="CHEBI:29985"/>
        <dbReference type="ChEBI" id="CHEBI:29986"/>
        <dbReference type="EC" id="5.1.1.3"/>
    </reaction>
</comment>
<comment type="pathway">
    <text evidence="1">Cell wall biogenesis; peptidoglycan biosynthesis.</text>
</comment>
<comment type="similarity">
    <text evidence="1">Belongs to the aspartate/glutamate racemases family.</text>
</comment>
<protein>
    <recommendedName>
        <fullName evidence="1">Glutamate racemase</fullName>
        <ecNumber evidence="1">5.1.1.3</ecNumber>
    </recommendedName>
</protein>
<reference key="1">
    <citation type="journal article" date="2006" name="Proc. Natl. Acad. Sci. U.S.A.">
        <title>Comparative genomics of the lactic acid bacteria.</title>
        <authorList>
            <person name="Makarova K.S."/>
            <person name="Slesarev A."/>
            <person name="Wolf Y.I."/>
            <person name="Sorokin A."/>
            <person name="Mirkin B."/>
            <person name="Koonin E.V."/>
            <person name="Pavlov A."/>
            <person name="Pavlova N."/>
            <person name="Karamychev V."/>
            <person name="Polouchine N."/>
            <person name="Shakhova V."/>
            <person name="Grigoriev I."/>
            <person name="Lou Y."/>
            <person name="Rohksar D."/>
            <person name="Lucas S."/>
            <person name="Huang K."/>
            <person name="Goodstein D.M."/>
            <person name="Hawkins T."/>
            <person name="Plengvidhya V."/>
            <person name="Welker D."/>
            <person name="Hughes J."/>
            <person name="Goh Y."/>
            <person name="Benson A."/>
            <person name="Baldwin K."/>
            <person name="Lee J.-H."/>
            <person name="Diaz-Muniz I."/>
            <person name="Dosti B."/>
            <person name="Smeianov V."/>
            <person name="Wechter W."/>
            <person name="Barabote R."/>
            <person name="Lorca G."/>
            <person name="Altermann E."/>
            <person name="Barrangou R."/>
            <person name="Ganesan B."/>
            <person name="Xie Y."/>
            <person name="Rawsthorne H."/>
            <person name="Tamir D."/>
            <person name="Parker C."/>
            <person name="Breidt F."/>
            <person name="Broadbent J.R."/>
            <person name="Hutkins R."/>
            <person name="O'Sullivan D."/>
            <person name="Steele J."/>
            <person name="Unlu G."/>
            <person name="Saier M.H. Jr."/>
            <person name="Klaenhammer T."/>
            <person name="Richardson P."/>
            <person name="Kozyavkin S."/>
            <person name="Weimer B.C."/>
            <person name="Mills D.A."/>
        </authorList>
    </citation>
    <scope>NUCLEOTIDE SEQUENCE [LARGE SCALE GENOMIC DNA]</scope>
    <source>
        <strain>ATCC 367 / BCRC 12310 / CIP 105137 / JCM 1170 / LMG 11437 / NCIMB 947 / NCTC 947</strain>
    </source>
</reference>
<proteinExistence type="inferred from homology"/>